<organism>
    <name type="scientific">Cavia porcellus</name>
    <name type="common">Guinea pig</name>
    <dbReference type="NCBI Taxonomy" id="10141"/>
    <lineage>
        <taxon>Eukaryota</taxon>
        <taxon>Metazoa</taxon>
        <taxon>Chordata</taxon>
        <taxon>Craniata</taxon>
        <taxon>Vertebrata</taxon>
        <taxon>Euteleostomi</taxon>
        <taxon>Mammalia</taxon>
        <taxon>Eutheria</taxon>
        <taxon>Euarchontoglires</taxon>
        <taxon>Glires</taxon>
        <taxon>Rodentia</taxon>
        <taxon>Hystricomorpha</taxon>
        <taxon>Caviidae</taxon>
        <taxon>Cavia</taxon>
    </lineage>
</organism>
<accession>Q6R5A3</accession>
<accession>Q8K1W1</accession>
<sequence length="839" mass="95244">MKKRASVDSKESEDPPQEDYSLDPLDVDANSKTPPAKPHTFSVSKSRNRLFGKSDLEESSPIDCSFREGEAASCPTITVSSVVTSPRPADGPTSTRQLTQDSIPTSAEKPLKLYDRRSIFDAVAQNNCQDLDSLLPFLQKSKKRLTDTEFKDPETGKTCLLKAMLNLHNGQNDTISLLLDIARQTNSLKEFVNASYTDSYYRGQTALHIAIERRNMVLVTLLVENGADVQAAANGDFFKKTKGRPGFYFGELPLSLAACTNQLAIVKFLLQNSWQPADISARDSVGNTVLHALVEVADNTADNTKFVTSMYNEILILGAKLYPTLKLEELTNKKGFTPLALAASSGKIGVLAYILQREIPEPECRHLSRKFTEWAYGPVHSSLYDLSCIDTCEKNSVLEVIAYSSSETPNRHDMLLVEPLNRLLQDKWDRFVKRIFYFNFFIYCLYMIIFTMAAYYRPVDGLPPYKMKNTVGDYFRVTGEILSVIGGFHFFFRGIQYFLQRRPSVKTLFVDSYSEILFFVQSLFLLASVVLYFSHRKEYVACMVFSLALGWTNMLYYTRGFQQMGIYAVMIEKMILRDLCRFMFVYLVFLFGFSTAVVTLIEDGKNESLSAEPHRWRGPGCRSAKNSYNSLYSTCLELFKFTIGMGDLEFTENYDFKAVFIILLLAYVILTYILLLNMLIALMGETVNKIAQESKNIWKLQRAITILDTEKSFLKCMRKAFRSGKLLQVGYTPDGKDDYRWCFRVDEVNWTTWNTNVGIINEDPGNCEGVKRTLSFSLRSGRVSGRNWKNFALVPLLRDASTRDRHSAQPEEVHLKHFSGSLKPEDAEVFKDSAVPGEK</sequence>
<feature type="chain" id="PRO_0000215337" description="Transient receptor potential cation channel subfamily V member 1">
    <location>
        <begin position="1"/>
        <end position="839"/>
    </location>
</feature>
<feature type="topological domain" description="Cytoplasmic" evidence="3">
    <location>
        <begin position="1"/>
        <end position="433"/>
    </location>
</feature>
<feature type="transmembrane region" description="Helical; Name=S1" evidence="3">
    <location>
        <begin position="434"/>
        <end position="455"/>
    </location>
</feature>
<feature type="topological domain" description="Extracellular" evidence="3">
    <location>
        <begin position="456"/>
        <end position="472"/>
    </location>
</feature>
<feature type="transmembrane region" description="Helical; Name=S2" evidence="3">
    <location>
        <begin position="473"/>
        <end position="497"/>
    </location>
</feature>
<feature type="topological domain" description="Cytoplasmic" evidence="3">
    <location>
        <begin position="498"/>
        <end position="510"/>
    </location>
</feature>
<feature type="transmembrane region" description="Helical; Name=S3" evidence="3">
    <location>
        <begin position="511"/>
        <end position="532"/>
    </location>
</feature>
<feature type="topological domain" description="Extracellular" evidence="3">
    <location>
        <begin position="533"/>
        <end position="535"/>
    </location>
</feature>
<feature type="transmembrane region" description="Helical; Name=S4" evidence="3">
    <location>
        <begin position="536"/>
        <end position="556"/>
    </location>
</feature>
<feature type="topological domain" description="Cytoplasmic" evidence="3">
    <location>
        <begin position="557"/>
        <end position="559"/>
    </location>
</feature>
<feature type="transmembrane region" description="Helical; Name=S5" evidence="3">
    <location>
        <begin position="560"/>
        <end position="598"/>
    </location>
</feature>
<feature type="topological domain" description="Extracellular" evidence="3">
    <location>
        <begin position="599"/>
        <end position="630"/>
    </location>
</feature>
<feature type="intramembrane region" description="Pore-forming" evidence="3">
    <location>
        <begin position="631"/>
        <end position="652"/>
    </location>
</feature>
<feature type="topological domain" description="Extracellular" evidence="3">
    <location>
        <begin position="653"/>
        <end position="656"/>
    </location>
</feature>
<feature type="transmembrane region" description="Helical; Name=S6" evidence="3">
    <location>
        <begin position="657"/>
        <end position="683"/>
    </location>
</feature>
<feature type="topological domain" description="Cytoplasmic" evidence="3">
    <location>
        <begin position="684"/>
        <end position="839"/>
    </location>
</feature>
<feature type="repeat" description="ANK 1" evidence="3">
    <location>
        <begin position="111"/>
        <end position="139"/>
    </location>
</feature>
<feature type="repeat" description="ANK 2" evidence="3">
    <location>
        <begin position="154"/>
        <end position="187"/>
    </location>
</feature>
<feature type="repeat" description="ANK 3" evidence="3">
    <location>
        <begin position="204"/>
        <end position="229"/>
    </location>
</feature>
<feature type="repeat" description="ANK 4" evidence="3">
    <location>
        <begin position="250"/>
        <end position="277"/>
    </location>
</feature>
<feature type="repeat" description="ANK 5" evidence="3">
    <location>
        <begin position="286"/>
        <end position="322"/>
    </location>
</feature>
<feature type="repeat" description="ANK 6" evidence="3">
    <location>
        <begin position="336"/>
        <end position="359"/>
    </location>
</feature>
<feature type="repeat" description="ANK 7" evidence="3">
    <location>
        <begin position="394"/>
        <end position="416"/>
    </location>
</feature>
<feature type="region of interest" description="Disordered" evidence="5">
    <location>
        <begin position="1"/>
        <end position="59"/>
    </location>
</feature>
<feature type="region of interest" description="Disordered" evidence="5">
    <location>
        <begin position="82"/>
        <end position="107"/>
    </location>
</feature>
<feature type="region of interest" description="AD" evidence="1">
    <location>
        <begin position="685"/>
        <end position="713"/>
    </location>
</feature>
<feature type="region of interest" description="Interaction with calmodulin" evidence="1">
    <location>
        <begin position="768"/>
        <end position="802"/>
    </location>
</feature>
<feature type="region of interest" description="Required for PIP2-mediated channel inhibition" evidence="1">
    <location>
        <begin position="778"/>
        <end position="793"/>
    </location>
</feature>
<feature type="short sequence motif" description="Selectivity filter" evidence="1">
    <location>
        <begin position="644"/>
        <end position="647"/>
    </location>
</feature>
<feature type="compositionally biased region" description="Basic and acidic residues" evidence="5">
    <location>
        <begin position="1"/>
        <end position="13"/>
    </location>
</feature>
<feature type="compositionally biased region" description="Polar residues" evidence="5">
    <location>
        <begin position="92"/>
        <end position="105"/>
    </location>
</feature>
<feature type="binding site" evidence="1">
    <location>
        <position position="117"/>
    </location>
    <ligand>
        <name>ATP</name>
        <dbReference type="ChEBI" id="CHEBI:30616"/>
    </ligand>
</feature>
<feature type="binding site" evidence="1">
    <location>
        <position position="157"/>
    </location>
    <ligand>
        <name>ATP</name>
        <dbReference type="ChEBI" id="CHEBI:30616"/>
    </ligand>
</feature>
<feature type="binding site" evidence="1">
    <location>
        <position position="162"/>
    </location>
    <ligand>
        <name>ATP</name>
        <dbReference type="ChEBI" id="CHEBI:30616"/>
    </ligand>
</feature>
<feature type="binding site" evidence="1">
    <location>
        <position position="166"/>
    </location>
    <ligand>
        <name>ATP</name>
        <dbReference type="ChEBI" id="CHEBI:30616"/>
    </ligand>
</feature>
<feature type="binding site" evidence="1">
    <location>
        <begin position="201"/>
        <end position="204"/>
    </location>
    <ligand>
        <name>ATP</name>
        <dbReference type="ChEBI" id="CHEBI:30616"/>
    </ligand>
</feature>
<feature type="binding site" evidence="1">
    <location>
        <begin position="212"/>
        <end position="213"/>
    </location>
    <ligand>
        <name>ATP</name>
        <dbReference type="ChEBI" id="CHEBI:30616"/>
    </ligand>
</feature>
<feature type="binding site" evidence="1">
    <location>
        <begin position="513"/>
        <end position="514"/>
    </location>
    <ligand>
        <name>resiniferatoxin</name>
        <dbReference type="ChEBI" id="CHEBI:8809"/>
        <note>agonist</note>
    </ligand>
</feature>
<feature type="binding site" evidence="1">
    <location>
        <position position="552"/>
    </location>
    <ligand>
        <name>resiniferatoxin</name>
        <dbReference type="ChEBI" id="CHEBI:8809"/>
        <note>agonist</note>
    </ligand>
</feature>
<feature type="binding site" evidence="1">
    <location>
        <position position="559"/>
    </location>
    <ligand>
        <name>resiniferatoxin</name>
        <dbReference type="ChEBI" id="CHEBI:8809"/>
        <note>agonist</note>
    </ligand>
</feature>
<feature type="binding site" evidence="3">
    <location>
        <position position="644"/>
    </location>
    <ligand>
        <name>Na(+)</name>
        <dbReference type="ChEBI" id="CHEBI:29101"/>
        <label>1</label>
        <note>ligand shared among four neighboring subunits</note>
    </ligand>
</feature>
<feature type="binding site" evidence="3">
    <location>
        <position position="644"/>
    </location>
    <ligand>
        <name>Na(+)</name>
        <dbReference type="ChEBI" id="CHEBI:29101"/>
        <label>2</label>
        <note>ligand shared among four neighboring subunits</note>
    </ligand>
</feature>
<feature type="binding site" evidence="4">
    <location>
        <position position="647"/>
    </location>
    <ligand>
        <name>Ca(2+)</name>
        <dbReference type="ChEBI" id="CHEBI:29108"/>
        <note>ligand shared between two neighboring subunits</note>
    </ligand>
</feature>
<feature type="modified residue" description="Phosphoserine; by PKA and PKD" evidence="1">
    <location>
        <position position="118"/>
    </location>
</feature>
<feature type="modified residue" description="Phosphothreonine; by PKA; in vitro" evidence="1">
    <location>
        <position position="146"/>
    </location>
</feature>
<feature type="modified residue" description="Phosphothreonine; by PKA; in vitro" evidence="1">
    <location>
        <position position="372"/>
    </location>
</feature>
<feature type="modified residue" description="Phosphoserine; by PKC/PRKCE" evidence="1">
    <location>
        <position position="504"/>
    </location>
</feature>
<feature type="modified residue" description="Phosphothreonine" evidence="1">
    <location>
        <position position="705"/>
    </location>
</feature>
<feature type="modified residue" description="Phosphoserine" evidence="1">
    <location>
        <position position="775"/>
    </location>
</feature>
<feature type="modified residue" description="Phosphoserine; by PKC/PRKCE and PKC/PRKCZ" evidence="1">
    <location>
        <position position="801"/>
    </location>
</feature>
<feature type="modified residue" description="Phosphoserine" evidence="1">
    <location>
        <position position="821"/>
    </location>
</feature>
<feature type="glycosylation site" description="N-linked (GlcNAc...) asparagine" evidence="1">
    <location>
        <position position="606"/>
    </location>
</feature>
<feature type="sequence conflict" description="In Ref. 1; CAD37814." evidence="7" ref="1">
    <original>P</original>
    <variation>T</variation>
    <location>
        <position position="24"/>
    </location>
</feature>
<feature type="sequence conflict" description="In Ref. 1; CAD37814." evidence="7" ref="1">
    <original>L</original>
    <variation>F</variation>
    <location>
        <position position="113"/>
    </location>
</feature>
<comment type="function">
    <text evidence="1 6">Non-selective calcium permeant cation channel involved in detection of noxious chemical and thermal stimuli (PubMed:12243775). Seems to mediate proton influx and may be involved in intracellular acidosis in nociceptive neurons. Involved in mediation of inflammatory pain and hyperalgesia. Sensitized by a phosphatidylinositol second messenger system activated by receptor tyrosine kinases, which involves PKC isozymes and PCL. Activation by vanilloids, like capsaicin, and temperatures higher than 42 degrees Celsius (By similarity). Upon activation, exhibits a time- and Ca(2+)-dependent outward rectification, followed by a long-lasting refractory state. Mild extracellular acidic pH (6.5) potentiates channel activation by noxious heat and vanilloids, whereas acidic conditions (pH &lt;6) directly activate the channel. Can be activated by endogenous compounds, including 12-hydroperoxytetraenoic acid and bradykinin. Acts as ionotropic endocannabinoid receptor with central neuromodulatory effects. Triggers a form of long-term depression (TRPV1-LTD) mediated by the endocannabinoid anandamine in the hippocampus and nucleus accumbens by affecting AMPA receptors endocytosis (By similarity).</text>
</comment>
<comment type="catalytic activity">
    <reaction evidence="6">
        <text>Ca(2+)(in) = Ca(2+)(out)</text>
        <dbReference type="Rhea" id="RHEA:29671"/>
        <dbReference type="ChEBI" id="CHEBI:29108"/>
    </reaction>
</comment>
<comment type="catalytic activity">
    <reaction evidence="1">
        <text>Mg(2+)(in) = Mg(2+)(out)</text>
        <dbReference type="Rhea" id="RHEA:29827"/>
        <dbReference type="ChEBI" id="CHEBI:18420"/>
    </reaction>
</comment>
<comment type="catalytic activity">
    <reaction evidence="1">
        <text>Na(+)(in) = Na(+)(out)</text>
        <dbReference type="Rhea" id="RHEA:34963"/>
        <dbReference type="ChEBI" id="CHEBI:29101"/>
    </reaction>
</comment>
<comment type="catalytic activity">
    <reaction evidence="1">
        <text>K(+)(in) = K(+)(out)</text>
        <dbReference type="Rhea" id="RHEA:29463"/>
        <dbReference type="ChEBI" id="CHEBI:29103"/>
    </reaction>
</comment>
<comment type="activity regulation">
    <text evidence="1 2">Channel activity is activated via the interaction with PIRT and phosphatidylinositol 4,5-bisphosphate (PIP2). Both PIRT and PIP2 are required to activate channel activity. The channel is sensitized by ATP binding. Repeated stimulation with capsaicin gives rise to progressively smaller responses, due to desensitization. This desensitization is triggered by the influx of calcium ions and is inhibited by elevated ATP levels. Ca(2+) and CALM displace ATP from its binding site and trigger a conformation change that leads to a closed, desensitized channel. Intracellular PIP2 inhibits desensitization. The double-knot toxin (DkTx) from the Chinese earth tiger tarantula activates the channel and traps it in an open conformation (By similarity). The Scolopendra mutilans RhTx toxin potentiates the heat activation pathway mediated by this channel by binding to the charge-rich outer pore region (in an activated state) (By similarity).</text>
</comment>
<comment type="subunit">
    <text evidence="1 2 3">Homotetramer (By similarity). Interacts with PIRT (By similarity). May also form a heteromeric channel with TRPV3. Interacts with CALM, PRKCM and CSK. Interacts with PRKCG and NTRK1, probably by forming a trimeric complex (By similarity). Interacts with the Scolopendra mutilans RhTx toxin (By similarity). Interacts with TMEM100 (By similarity). Interacts with PACS2 (By similarity).</text>
</comment>
<comment type="subcellular location">
    <subcellularLocation>
        <location evidence="1">Postsynaptic cell membrane</location>
        <topology evidence="1">Multi-pass membrane protein</topology>
    </subcellularLocation>
    <subcellularLocation>
        <location evidence="1">Cell projection</location>
        <location evidence="1">Dendritic spine membrane</location>
        <topology evidence="1">Multi-pass membrane protein</topology>
    </subcellularLocation>
    <subcellularLocation>
        <location evidence="6">Cell membrane</location>
        <topology evidence="1">Multi-pass membrane protein</topology>
    </subcellularLocation>
    <text evidence="1">Mostly, but not exclusively expressed in postsynaptic dendritic spines.</text>
</comment>
<comment type="domain">
    <text evidence="1">The association domain (AD) is necessary for self-association.</text>
</comment>
<comment type="PTM">
    <text evidence="1">Phosphorylation by PKA reverses capsaicin-induced dephosphorylation at multiple sites, probably including Ser-118 as a major phosphorylation site. Phosphorylation by CAMKII seems to regulate binding to vanilloids. Phosphorylated and modulated by PRKCE, PRKCM and probably PRKCZ. Dephosphorylation by calcineurin seems to lead to receptor desensitization and phosphorylation by CAMKII recovers activity.</text>
</comment>
<comment type="miscellaneous">
    <text>Responses evoked by low pH and heat, and capsaicin can be antagonized by capsazepine.</text>
</comment>
<comment type="similarity">
    <text evidence="7">Belongs to the transient receptor (TC 1.A.4) family. TrpV subfamily. TRPV1 sub-subfamily.</text>
</comment>
<protein>
    <recommendedName>
        <fullName>Transient receptor potential cation channel subfamily V member 1</fullName>
        <shortName>TrpV1</shortName>
    </recommendedName>
    <alternativeName>
        <fullName>Osm-9-like TRP channel 1</fullName>
        <shortName>OTRPC1</shortName>
    </alternativeName>
    <alternativeName>
        <fullName>Vanilloid receptor 1</fullName>
    </alternativeName>
</protein>
<gene>
    <name type="primary">Trpv1</name>
</gene>
<name>TRPV1_CAVPO</name>
<reference key="1">
    <citation type="journal article" date="2002" name="Neuropharmacology">
        <title>Cloning and functional characterisation of the guinea-pig vanilloid receptor 1.</title>
        <authorList>
            <person name="Savidge J."/>
            <person name="Davis C."/>
            <person name="Shah K."/>
            <person name="Colley S."/>
            <person name="Phillips E."/>
            <person name="Ranasinghe S."/>
            <person name="Winter J."/>
            <person name="Kotsonis P."/>
            <person name="Rang H.P."/>
            <person name="McIntyre P."/>
        </authorList>
    </citation>
    <scope>NUCLEOTIDE SEQUENCE [MRNA]</scope>
    <scope>FUNCTION</scope>
    <scope>SUBCELLULAR LOCATION</scope>
    <scope>TRANSPORTER ACTIVITY</scope>
    <source>
        <strain>Dunkin-Hartley</strain>
        <tissue>Spinal ganglion</tissue>
    </source>
</reference>
<reference key="2">
    <citation type="submission" date="2003-12" db="EMBL/GenBank/DDBJ databases">
        <title>Cavia porcellus TRPV1.</title>
        <authorList>
            <person name="Coombs S."/>
            <person name="Peck A."/>
            <person name="Cortright D."/>
        </authorList>
    </citation>
    <scope>NUCLEOTIDE SEQUENCE [MRNA]</scope>
    <source>
        <tissue>Spinal ganglion</tissue>
    </source>
</reference>
<proteinExistence type="evidence at transcript level"/>
<evidence type="ECO:0000250" key="1">
    <source>
        <dbReference type="UniProtKB" id="O35433"/>
    </source>
</evidence>
<evidence type="ECO:0000250" key="2">
    <source>
        <dbReference type="UniProtKB" id="Q704Y3"/>
    </source>
</evidence>
<evidence type="ECO:0000250" key="3">
    <source>
        <dbReference type="UniProtKB" id="Q8NER1"/>
    </source>
</evidence>
<evidence type="ECO:0000250" key="4">
    <source>
        <dbReference type="UniProtKB" id="Q9R186"/>
    </source>
</evidence>
<evidence type="ECO:0000256" key="5">
    <source>
        <dbReference type="SAM" id="MobiDB-lite"/>
    </source>
</evidence>
<evidence type="ECO:0000269" key="6">
    <source>
    </source>
</evidence>
<evidence type="ECO:0000305" key="7"/>
<keyword id="KW-0040">ANK repeat</keyword>
<keyword id="KW-0067">ATP-binding</keyword>
<keyword id="KW-0106">Calcium</keyword>
<keyword id="KW-0107">Calcium channel</keyword>
<keyword id="KW-0109">Calcium transport</keyword>
<keyword id="KW-0112">Calmodulin-binding</keyword>
<keyword id="KW-1003">Cell membrane</keyword>
<keyword id="KW-0966">Cell projection</keyword>
<keyword id="KW-0325">Glycoprotein</keyword>
<keyword id="KW-0407">Ion channel</keyword>
<keyword id="KW-0406">Ion transport</keyword>
<keyword id="KW-0472">Membrane</keyword>
<keyword id="KW-0479">Metal-binding</keyword>
<keyword id="KW-0547">Nucleotide-binding</keyword>
<keyword id="KW-0597">Phosphoprotein</keyword>
<keyword id="KW-0628">Postsynaptic cell membrane</keyword>
<keyword id="KW-1185">Reference proteome</keyword>
<keyword id="KW-0677">Repeat</keyword>
<keyword id="KW-0915">Sodium</keyword>
<keyword id="KW-0770">Synapse</keyword>
<keyword id="KW-0812">Transmembrane</keyword>
<keyword id="KW-1133">Transmembrane helix</keyword>
<keyword id="KW-0813">Transport</keyword>
<dbReference type="EMBL" id="AJ492922">
    <property type="protein sequence ID" value="CAD37814.2"/>
    <property type="molecule type" value="mRNA"/>
</dbReference>
<dbReference type="EMBL" id="AY513245">
    <property type="protein sequence ID" value="AAS13460.1"/>
    <property type="molecule type" value="mRNA"/>
</dbReference>
<dbReference type="RefSeq" id="NP_001166123.1">
    <property type="nucleotide sequence ID" value="NM_001172652.1"/>
</dbReference>
<dbReference type="SMR" id="Q6R5A3"/>
<dbReference type="FunCoup" id="Q6R5A3">
    <property type="interactions" value="447"/>
</dbReference>
<dbReference type="STRING" id="10141.ENSCPOP00000009106"/>
<dbReference type="BindingDB" id="Q6R5A3"/>
<dbReference type="ChEMBL" id="CHEMBL5132"/>
<dbReference type="GlyCosmos" id="Q6R5A3">
    <property type="glycosylation" value="1 site, No reported glycans"/>
</dbReference>
<dbReference type="Ensembl" id="ENSCPOT00000010234.3">
    <property type="protein sequence ID" value="ENSCPOP00000009106.2"/>
    <property type="gene ID" value="ENSCPOG00000010142.4"/>
</dbReference>
<dbReference type="GeneID" id="100135466"/>
<dbReference type="KEGG" id="cpoc:100135466"/>
<dbReference type="CTD" id="7442"/>
<dbReference type="VEuPathDB" id="HostDB:ENSCPOG00000010142"/>
<dbReference type="eggNOG" id="KOG3676">
    <property type="taxonomic scope" value="Eukaryota"/>
</dbReference>
<dbReference type="GeneTree" id="ENSGT00940000160870"/>
<dbReference type="InParanoid" id="Q6R5A3"/>
<dbReference type="OMA" id="YQYLHQN"/>
<dbReference type="OrthoDB" id="533508at2759"/>
<dbReference type="TreeFam" id="TF314711"/>
<dbReference type="PRO" id="PR:Q6R5A3"/>
<dbReference type="Proteomes" id="UP000005447">
    <property type="component" value="Unassembled WGS sequence"/>
</dbReference>
<dbReference type="GO" id="GO:0032591">
    <property type="term" value="C:dendritic spine membrane"/>
    <property type="evidence" value="ECO:0007669"/>
    <property type="project" value="UniProtKB-SubCell"/>
</dbReference>
<dbReference type="GO" id="GO:0098982">
    <property type="term" value="C:GABA-ergic synapse"/>
    <property type="evidence" value="ECO:0007669"/>
    <property type="project" value="Ensembl"/>
</dbReference>
<dbReference type="GO" id="GO:0016020">
    <property type="term" value="C:membrane"/>
    <property type="evidence" value="ECO:0000250"/>
    <property type="project" value="UniProtKB"/>
</dbReference>
<dbReference type="GO" id="GO:0005886">
    <property type="term" value="C:plasma membrane"/>
    <property type="evidence" value="ECO:0000250"/>
    <property type="project" value="UniProtKB"/>
</dbReference>
<dbReference type="GO" id="GO:0045211">
    <property type="term" value="C:postsynaptic membrane"/>
    <property type="evidence" value="ECO:0000250"/>
    <property type="project" value="UniProtKB"/>
</dbReference>
<dbReference type="GO" id="GO:0005524">
    <property type="term" value="F:ATP binding"/>
    <property type="evidence" value="ECO:0000250"/>
    <property type="project" value="UniProtKB"/>
</dbReference>
<dbReference type="GO" id="GO:0005262">
    <property type="term" value="F:calcium channel activity"/>
    <property type="evidence" value="ECO:0000314"/>
    <property type="project" value="UniProtKB"/>
</dbReference>
<dbReference type="GO" id="GO:0005516">
    <property type="term" value="F:calmodulin binding"/>
    <property type="evidence" value="ECO:0000250"/>
    <property type="project" value="UniProtKB"/>
</dbReference>
<dbReference type="GO" id="GO:0005231">
    <property type="term" value="F:excitatory extracellular ligand-gated monoatomic ion channel activity"/>
    <property type="evidence" value="ECO:0000250"/>
    <property type="project" value="UniProtKB"/>
</dbReference>
<dbReference type="GO" id="GO:0005230">
    <property type="term" value="F:extracellular ligand-gated monoatomic ion channel activity"/>
    <property type="evidence" value="ECO:0000250"/>
    <property type="project" value="UniProtKB"/>
</dbReference>
<dbReference type="GO" id="GO:0015278">
    <property type="term" value="F:intracellularly gated calcium channel activity"/>
    <property type="evidence" value="ECO:0000250"/>
    <property type="project" value="UniProtKB"/>
</dbReference>
<dbReference type="GO" id="GO:0046872">
    <property type="term" value="F:metal ion binding"/>
    <property type="evidence" value="ECO:0007669"/>
    <property type="project" value="UniProtKB-KW"/>
</dbReference>
<dbReference type="GO" id="GO:0035091">
    <property type="term" value="F:phosphatidylinositol binding"/>
    <property type="evidence" value="ECO:0000250"/>
    <property type="project" value="UniProtKB"/>
</dbReference>
<dbReference type="GO" id="GO:0051219">
    <property type="term" value="F:phosphoprotein binding"/>
    <property type="evidence" value="ECO:0007669"/>
    <property type="project" value="Ensembl"/>
</dbReference>
<dbReference type="GO" id="GO:0097603">
    <property type="term" value="F:temperature-gated ion channel activity"/>
    <property type="evidence" value="ECO:0007669"/>
    <property type="project" value="Ensembl"/>
</dbReference>
<dbReference type="GO" id="GO:0004888">
    <property type="term" value="F:transmembrane signaling receptor activity"/>
    <property type="evidence" value="ECO:0000250"/>
    <property type="project" value="UniProtKB"/>
</dbReference>
<dbReference type="GO" id="GO:0048266">
    <property type="term" value="P:behavioral response to pain"/>
    <property type="evidence" value="ECO:0007669"/>
    <property type="project" value="Ensembl"/>
</dbReference>
<dbReference type="GO" id="GO:0098703">
    <property type="term" value="P:calcium ion import across plasma membrane"/>
    <property type="evidence" value="ECO:0000250"/>
    <property type="project" value="UniProtKB"/>
</dbReference>
<dbReference type="GO" id="GO:0070588">
    <property type="term" value="P:calcium ion transmembrane transport"/>
    <property type="evidence" value="ECO:0000250"/>
    <property type="project" value="UniProtKB"/>
</dbReference>
<dbReference type="GO" id="GO:0071468">
    <property type="term" value="P:cellular response to acidic pH"/>
    <property type="evidence" value="ECO:0000250"/>
    <property type="project" value="UniProtKB"/>
</dbReference>
<dbReference type="GO" id="GO:0071312">
    <property type="term" value="P:cellular response to alkaloid"/>
    <property type="evidence" value="ECO:0000250"/>
    <property type="project" value="UniProtKB"/>
</dbReference>
<dbReference type="GO" id="GO:0071318">
    <property type="term" value="P:cellular response to ATP"/>
    <property type="evidence" value="ECO:0000250"/>
    <property type="project" value="UniProtKB"/>
</dbReference>
<dbReference type="GO" id="GO:0034605">
    <property type="term" value="P:cellular response to heat"/>
    <property type="evidence" value="ECO:0000250"/>
    <property type="project" value="UniProtKB"/>
</dbReference>
<dbReference type="GO" id="GO:0050968">
    <property type="term" value="P:detection of chemical stimulus involved in sensory perception of pain"/>
    <property type="evidence" value="ECO:0007669"/>
    <property type="project" value="Ensembl"/>
</dbReference>
<dbReference type="GO" id="GO:0050965">
    <property type="term" value="P:detection of temperature stimulus involved in sensory perception of pain"/>
    <property type="evidence" value="ECO:0007669"/>
    <property type="project" value="Ensembl"/>
</dbReference>
<dbReference type="GO" id="GO:0050960">
    <property type="term" value="P:detection of temperature stimulus involved in thermoception"/>
    <property type="evidence" value="ECO:0007669"/>
    <property type="project" value="Ensembl"/>
</dbReference>
<dbReference type="GO" id="GO:0002024">
    <property type="term" value="P:diet induced thermogenesis"/>
    <property type="evidence" value="ECO:0007669"/>
    <property type="project" value="Ensembl"/>
</dbReference>
<dbReference type="GO" id="GO:0001660">
    <property type="term" value="P:fever generation"/>
    <property type="evidence" value="ECO:0007669"/>
    <property type="project" value="Ensembl"/>
</dbReference>
<dbReference type="GO" id="GO:0006629">
    <property type="term" value="P:lipid metabolic process"/>
    <property type="evidence" value="ECO:0007669"/>
    <property type="project" value="Ensembl"/>
</dbReference>
<dbReference type="GO" id="GO:0000122">
    <property type="term" value="P:negative regulation of transcription by RNA polymerase II"/>
    <property type="evidence" value="ECO:0007669"/>
    <property type="project" value="Ensembl"/>
</dbReference>
<dbReference type="GO" id="GO:0002790">
    <property type="term" value="P:peptide secretion"/>
    <property type="evidence" value="ECO:0007669"/>
    <property type="project" value="Ensembl"/>
</dbReference>
<dbReference type="GO" id="GO:0051289">
    <property type="term" value="P:protein homotetramerization"/>
    <property type="evidence" value="ECO:0000250"/>
    <property type="project" value="UniProtKB"/>
</dbReference>
<dbReference type="GO" id="GO:1901594">
    <property type="term" value="P:response to capsazepine"/>
    <property type="evidence" value="ECO:0000250"/>
    <property type="project" value="UniProtKB"/>
</dbReference>
<dbReference type="GO" id="GO:0050954">
    <property type="term" value="P:sensory perception of mechanical stimulus"/>
    <property type="evidence" value="ECO:0007669"/>
    <property type="project" value="Ensembl"/>
</dbReference>
<dbReference type="GO" id="GO:0050909">
    <property type="term" value="P:sensory perception of taste"/>
    <property type="evidence" value="ECO:0007669"/>
    <property type="project" value="Ensembl"/>
</dbReference>
<dbReference type="GO" id="GO:0060083">
    <property type="term" value="P:smooth muscle contraction involved in micturition"/>
    <property type="evidence" value="ECO:0007669"/>
    <property type="project" value="Ensembl"/>
</dbReference>
<dbReference type="CDD" id="cd22196">
    <property type="entry name" value="TRPV1"/>
    <property type="match status" value="1"/>
</dbReference>
<dbReference type="FunFam" id="1.10.287.70:FF:000074">
    <property type="entry name" value="Transient receptor potential cation channel subfamily V member 1"/>
    <property type="match status" value="1"/>
</dbReference>
<dbReference type="FunFam" id="1.25.40.20:FF:000018">
    <property type="entry name" value="Transient receptor potential cation channel subfamily V member 1"/>
    <property type="match status" value="1"/>
</dbReference>
<dbReference type="Gene3D" id="1.10.287.70">
    <property type="match status" value="1"/>
</dbReference>
<dbReference type="Gene3D" id="1.25.40.20">
    <property type="entry name" value="Ankyrin repeat-containing domain"/>
    <property type="match status" value="1"/>
</dbReference>
<dbReference type="InterPro" id="IPR002110">
    <property type="entry name" value="Ankyrin_rpt"/>
</dbReference>
<dbReference type="InterPro" id="IPR036770">
    <property type="entry name" value="Ankyrin_rpt-contain_sf"/>
</dbReference>
<dbReference type="InterPro" id="IPR005821">
    <property type="entry name" value="Ion_trans_dom"/>
</dbReference>
<dbReference type="InterPro" id="IPR024862">
    <property type="entry name" value="TRPV"/>
</dbReference>
<dbReference type="InterPro" id="IPR008347">
    <property type="entry name" value="TrpV1-4"/>
</dbReference>
<dbReference type="NCBIfam" id="TIGR00870">
    <property type="entry name" value="trp"/>
    <property type="match status" value="1"/>
</dbReference>
<dbReference type="PANTHER" id="PTHR10582:SF17">
    <property type="entry name" value="TRANSIENT RECEPTOR POTENTIAL CATION CHANNEL SUBFAMILY V MEMBER 1"/>
    <property type="match status" value="1"/>
</dbReference>
<dbReference type="PANTHER" id="PTHR10582">
    <property type="entry name" value="TRANSIENT RECEPTOR POTENTIAL ION CHANNEL PROTEIN"/>
    <property type="match status" value="1"/>
</dbReference>
<dbReference type="Pfam" id="PF00023">
    <property type="entry name" value="Ank"/>
    <property type="match status" value="1"/>
</dbReference>
<dbReference type="Pfam" id="PF12796">
    <property type="entry name" value="Ank_2"/>
    <property type="match status" value="1"/>
</dbReference>
<dbReference type="Pfam" id="PF00520">
    <property type="entry name" value="Ion_trans"/>
    <property type="match status" value="1"/>
</dbReference>
<dbReference type="PRINTS" id="PR01768">
    <property type="entry name" value="TRPVRECEPTOR"/>
</dbReference>
<dbReference type="SMART" id="SM00248">
    <property type="entry name" value="ANK"/>
    <property type="match status" value="4"/>
</dbReference>
<dbReference type="SUPFAM" id="SSF48403">
    <property type="entry name" value="Ankyrin repeat"/>
    <property type="match status" value="1"/>
</dbReference>
<dbReference type="PROSITE" id="PS50297">
    <property type="entry name" value="ANK_REP_REGION"/>
    <property type="match status" value="1"/>
</dbReference>
<dbReference type="PROSITE" id="PS50088">
    <property type="entry name" value="ANK_REPEAT"/>
    <property type="match status" value="1"/>
</dbReference>